<accession>Q09450</accession>
<keyword id="KW-0496">Mitochondrion</keyword>
<keyword id="KW-1185">Reference proteome</keyword>
<keyword id="KW-0808">Transferase</keyword>
<keyword id="KW-0809">Transit peptide</keyword>
<comment type="function">
    <text>Key enzyme for ketone body catabolism. Transfers the CoA moiety from succinate to acetoacetate. Formation of the enzyme-CoA intermediate proceeds via an unstable anhydride species formed between the carboxylate groups of the enzyme and substrate.</text>
</comment>
<comment type="catalytic activity">
    <reaction evidence="3">
        <text>a 3-oxo acid + succinyl-CoA = a 3-oxoacyl-CoA + succinate</text>
        <dbReference type="Rhea" id="RHEA:24564"/>
        <dbReference type="ChEBI" id="CHEBI:30031"/>
        <dbReference type="ChEBI" id="CHEBI:35973"/>
        <dbReference type="ChEBI" id="CHEBI:57292"/>
        <dbReference type="ChEBI" id="CHEBI:90726"/>
        <dbReference type="EC" id="2.8.3.5"/>
    </reaction>
</comment>
<comment type="pathway">
    <text>Ketone metabolism; succinyl-CoA degradation; acetoacetyl-CoA from succinyl-CoA: step 1/1.</text>
</comment>
<comment type="subunit">
    <text evidence="1">Homodimer.</text>
</comment>
<comment type="subcellular location">
    <subcellularLocation>
        <location evidence="1">Mitochondrion</location>
    </subcellularLocation>
</comment>
<comment type="similarity">
    <text evidence="4">Belongs to the 3-oxoacid CoA-transferase family.</text>
</comment>
<name>SCOT_CAEEL</name>
<dbReference type="EC" id="2.8.3.5"/>
<dbReference type="EMBL" id="Z48178">
    <property type="protein sequence ID" value="CAA88202.1"/>
    <property type="molecule type" value="Genomic_DNA"/>
</dbReference>
<dbReference type="PIR" id="T18942">
    <property type="entry name" value="T18942"/>
</dbReference>
<dbReference type="RefSeq" id="NP_496144.1">
    <property type="nucleotide sequence ID" value="NM_063743.8"/>
</dbReference>
<dbReference type="SMR" id="Q09450"/>
<dbReference type="BioGRID" id="39870">
    <property type="interactions" value="30"/>
</dbReference>
<dbReference type="DIP" id="DIP-26691N"/>
<dbReference type="FunCoup" id="Q09450">
    <property type="interactions" value="731"/>
</dbReference>
<dbReference type="STRING" id="6239.C05C10.3.1"/>
<dbReference type="PaxDb" id="6239-C05C10.3"/>
<dbReference type="PeptideAtlas" id="Q09450"/>
<dbReference type="EnsemblMetazoa" id="C05C10.3.1">
    <property type="protein sequence ID" value="C05C10.3.1"/>
    <property type="gene ID" value="WBGene00007330"/>
</dbReference>
<dbReference type="GeneID" id="174548"/>
<dbReference type="KEGG" id="cel:CELE_C05C10.3"/>
<dbReference type="UCSC" id="C05C10.3.1">
    <property type="organism name" value="c. elegans"/>
</dbReference>
<dbReference type="AGR" id="WB:WBGene00007330"/>
<dbReference type="CTD" id="174548"/>
<dbReference type="WormBase" id="C05C10.3">
    <property type="protein sequence ID" value="CE01467"/>
    <property type="gene ID" value="WBGene00007330"/>
</dbReference>
<dbReference type="eggNOG" id="KOG3822">
    <property type="taxonomic scope" value="Eukaryota"/>
</dbReference>
<dbReference type="GeneTree" id="ENSGT00390000009130"/>
<dbReference type="HOGENOM" id="CLU_019942_1_3_1"/>
<dbReference type="InParanoid" id="Q09450"/>
<dbReference type="OMA" id="VKTMGQI"/>
<dbReference type="OrthoDB" id="1933379at2759"/>
<dbReference type="PhylomeDB" id="Q09450"/>
<dbReference type="Reactome" id="R-CEL-77108">
    <property type="pathway name" value="Utilization of Ketone Bodies"/>
</dbReference>
<dbReference type="Reactome" id="R-CEL-9837999">
    <property type="pathway name" value="Mitochondrial protein degradation"/>
</dbReference>
<dbReference type="UniPathway" id="UPA00929">
    <property type="reaction ID" value="UER00894"/>
</dbReference>
<dbReference type="PRO" id="PR:Q09450"/>
<dbReference type="Proteomes" id="UP000001940">
    <property type="component" value="Chromosome II"/>
</dbReference>
<dbReference type="Bgee" id="WBGene00007330">
    <property type="expression patterns" value="Expressed in larva and 4 other cell types or tissues"/>
</dbReference>
<dbReference type="GO" id="GO:0005739">
    <property type="term" value="C:mitochondrion"/>
    <property type="evidence" value="ECO:0007005"/>
    <property type="project" value="WormBase"/>
</dbReference>
<dbReference type="GO" id="GO:0008260">
    <property type="term" value="F:succinyl-CoA:3-oxo-acid CoA-transferase activity"/>
    <property type="evidence" value="ECO:0000318"/>
    <property type="project" value="GO_Central"/>
</dbReference>
<dbReference type="GO" id="GO:0046952">
    <property type="term" value="P:ketone body catabolic process"/>
    <property type="evidence" value="ECO:0007669"/>
    <property type="project" value="InterPro"/>
</dbReference>
<dbReference type="GO" id="GO:1902224">
    <property type="term" value="P:ketone body metabolic process"/>
    <property type="evidence" value="ECO:0000318"/>
    <property type="project" value="GO_Central"/>
</dbReference>
<dbReference type="FunFam" id="3.40.1080.10:FF:000001">
    <property type="entry name" value="Succinyl-coa:3-ketoacid-coenzyme a transferase subunit b"/>
    <property type="match status" value="1"/>
</dbReference>
<dbReference type="FunFam" id="3.40.1080.10:FF:000002">
    <property type="entry name" value="Succinyl-CoA:3-ketoacid-coenzyme A transferase, mitochondrial"/>
    <property type="match status" value="1"/>
</dbReference>
<dbReference type="Gene3D" id="3.40.1080.10">
    <property type="entry name" value="Glutaconate Coenzyme A-transferase"/>
    <property type="match status" value="2"/>
</dbReference>
<dbReference type="InterPro" id="IPR012792">
    <property type="entry name" value="3-oxoacid_CoA-transf_A"/>
</dbReference>
<dbReference type="InterPro" id="IPR012791">
    <property type="entry name" value="3-oxoacid_CoA-transf_B"/>
</dbReference>
<dbReference type="InterPro" id="IPR014388">
    <property type="entry name" value="3-oxoacid_CoA-transferase"/>
</dbReference>
<dbReference type="InterPro" id="IPR004165">
    <property type="entry name" value="CoA_trans_fam_I"/>
</dbReference>
<dbReference type="InterPro" id="IPR004164">
    <property type="entry name" value="CoA_transf_AS"/>
</dbReference>
<dbReference type="InterPro" id="IPR004163">
    <property type="entry name" value="CoA_transf_BS"/>
</dbReference>
<dbReference type="InterPro" id="IPR037171">
    <property type="entry name" value="NagB/RpiA_transferase-like"/>
</dbReference>
<dbReference type="NCBIfam" id="TIGR02429">
    <property type="entry name" value="pcaI_scoA_fam"/>
    <property type="match status" value="1"/>
</dbReference>
<dbReference type="NCBIfam" id="TIGR02428">
    <property type="entry name" value="pcaJ_scoB_fam"/>
    <property type="match status" value="1"/>
</dbReference>
<dbReference type="PANTHER" id="PTHR13707">
    <property type="entry name" value="KETOACID-COENZYME A TRANSFERASE"/>
    <property type="match status" value="1"/>
</dbReference>
<dbReference type="PANTHER" id="PTHR13707:SF23">
    <property type="entry name" value="SUCCINYL-COA:3-KETOACID-COENZYME A TRANSFERASE"/>
    <property type="match status" value="1"/>
</dbReference>
<dbReference type="Pfam" id="PF01144">
    <property type="entry name" value="CoA_trans"/>
    <property type="match status" value="2"/>
</dbReference>
<dbReference type="PIRSF" id="PIRSF000858">
    <property type="entry name" value="SCOT-t"/>
    <property type="match status" value="1"/>
</dbReference>
<dbReference type="SMART" id="SM00882">
    <property type="entry name" value="CoA_trans"/>
    <property type="match status" value="2"/>
</dbReference>
<dbReference type="SUPFAM" id="SSF100950">
    <property type="entry name" value="NagB/RpiA/CoA transferase-like"/>
    <property type="match status" value="2"/>
</dbReference>
<dbReference type="PROSITE" id="PS01273">
    <property type="entry name" value="COA_TRANSF_1"/>
    <property type="match status" value="1"/>
</dbReference>
<dbReference type="PROSITE" id="PS01274">
    <property type="entry name" value="COA_TRANSF_2"/>
    <property type="match status" value="1"/>
</dbReference>
<proteinExistence type="inferred from homology"/>
<gene>
    <name type="ORF">C05C10.3</name>
</gene>
<reference key="1">
    <citation type="journal article" date="1998" name="Science">
        <title>Genome sequence of the nematode C. elegans: a platform for investigating biology.</title>
        <authorList>
            <consortium name="The C. elegans sequencing consortium"/>
        </authorList>
    </citation>
    <scope>NUCLEOTIDE SEQUENCE [LARGE SCALE GENOMIC DNA]</scope>
    <source>
        <strain>Bristol N2</strain>
    </source>
</reference>
<protein>
    <recommendedName>
        <fullName>Probable succinyl-CoA:3-ketoacid coenzyme A transferase, mitochondrial</fullName>
        <ecNumber>2.8.3.5</ecNumber>
    </recommendedName>
    <alternativeName>
        <fullName>3-oxoacid CoA-transferase</fullName>
    </alternativeName>
</protein>
<evidence type="ECO:0000250" key="1"/>
<evidence type="ECO:0000255" key="2"/>
<evidence type="ECO:0000255" key="3">
    <source>
        <dbReference type="PROSITE-ProRule" id="PRU10034"/>
    </source>
</evidence>
<evidence type="ECO:0000305" key="4"/>
<feature type="transit peptide" description="Mitochondrion" evidence="2">
    <location>
        <begin position="1"/>
        <end position="36"/>
    </location>
</feature>
<feature type="chain" id="PRO_0000002417" description="Probable succinyl-CoA:3-ketoacid coenzyme A transferase, mitochondrial">
    <location>
        <begin position="37"/>
        <end position="521"/>
    </location>
</feature>
<feature type="active site" description="5-glutamyl coenzyme A thioester intermediate" evidence="3">
    <location>
        <position position="342"/>
    </location>
</feature>
<organism>
    <name type="scientific">Caenorhabditis elegans</name>
    <dbReference type="NCBI Taxonomy" id="6239"/>
    <lineage>
        <taxon>Eukaryota</taxon>
        <taxon>Metazoa</taxon>
        <taxon>Ecdysozoa</taxon>
        <taxon>Nematoda</taxon>
        <taxon>Chromadorea</taxon>
        <taxon>Rhabditida</taxon>
        <taxon>Rhabditina</taxon>
        <taxon>Rhabditomorpha</taxon>
        <taxon>Rhabditoidea</taxon>
        <taxon>Rhabditidae</taxon>
        <taxon>Peloderinae</taxon>
        <taxon>Caenorhabditis</taxon>
    </lineage>
</organism>
<sequence>MPILSKIWAAPAAGILRKTPRNAHQMRLISMTSSMKAKVFNSAEEAVKDIPDNAKLLVGGFGLCGIPENLIQAITKTGQKGLTCVSNNAGVDNWGLGLLLQTRQIKKMISSYVGENGEFARQYLSGELELEFTPQGTLAERIRAAGAGVPAFYTPTGYGTQIQEGGAPIKYSKTEKGKIEVASKAKETRQFNGINYVMEEAIWGDFALIKAWRADTLGNIQFRHAAGNFNNPMCKASKCTIVEVEEIVEPGVIAPNDVHIPSIYCHRLVLGKNYKKPIERPMFAHEGPIKPSTSAAGKSREIIAARAALEFTDGMYANLGIGIPTLAPNYIPNGFTVHLQSENGIIGVGPYPRKGTEDADLINAGKEPITLLKGASIVGSDESFAMIRGSHMDITVLGALQCSQFGDLANWMIPGKLVKGMGGAMDLVSAPGARVIVVMEHVSKNGEPKILEHCELPLTGKGVISRIITDMAVFDVDTKNGLTLIEVRKDLTVDDIKKLTACKFEISENLKPMGQAPLNQG</sequence>